<organism>
    <name type="scientific">Staphylococcus aureus (strain MW2)</name>
    <dbReference type="NCBI Taxonomy" id="196620"/>
    <lineage>
        <taxon>Bacteria</taxon>
        <taxon>Bacillati</taxon>
        <taxon>Bacillota</taxon>
        <taxon>Bacilli</taxon>
        <taxon>Bacillales</taxon>
        <taxon>Staphylococcaceae</taxon>
        <taxon>Staphylococcus</taxon>
    </lineage>
</organism>
<sequence length="187" mass="21023">MSHLALKDLFSGFFVIDDEEEVEVPDKQQQVNEAPAKEQSQQTTKQNAIKSVPQKSASRYTTTSEERNNRMSNYSKNNSRNVVTMNNATPNNASQESSKMCLFEPRVFSDTQDIADELKNRRATLVNLQRIDKVSAKRIIDFLSGTVYAIGGDIQRVGTDIFLCTPDNVEVAGSITDHIENMEHSFD</sequence>
<gene>
    <name evidence="1" type="primary">sepF</name>
    <name type="ordered locus">MW1072</name>
</gene>
<evidence type="ECO:0000255" key="1">
    <source>
        <dbReference type="HAMAP-Rule" id="MF_01197"/>
    </source>
</evidence>
<evidence type="ECO:0000256" key="2">
    <source>
        <dbReference type="SAM" id="MobiDB-lite"/>
    </source>
</evidence>
<keyword id="KW-0131">Cell cycle</keyword>
<keyword id="KW-0132">Cell division</keyword>
<keyword id="KW-0963">Cytoplasm</keyword>
<keyword id="KW-0717">Septation</keyword>
<comment type="function">
    <text evidence="1">Cell division protein that is part of the divisome complex and is recruited early to the Z-ring. Probably stimulates Z-ring formation, perhaps through the cross-linking of FtsZ protofilaments. Its function overlaps with FtsA.</text>
</comment>
<comment type="subunit">
    <text evidence="1">Homodimer. Interacts with FtsZ.</text>
</comment>
<comment type="subcellular location">
    <subcellularLocation>
        <location evidence="1">Cytoplasm</location>
    </subcellularLocation>
    <text evidence="1">Localizes to the division site, in a FtsZ-dependent manner.</text>
</comment>
<comment type="similarity">
    <text evidence="1">Belongs to the SepF family.</text>
</comment>
<protein>
    <recommendedName>
        <fullName evidence="1">Cell division protein SepF</fullName>
    </recommendedName>
</protein>
<feature type="chain" id="PRO_0000334082" description="Cell division protein SepF">
    <location>
        <begin position="1"/>
        <end position="187"/>
    </location>
</feature>
<feature type="region of interest" description="Disordered" evidence="2">
    <location>
        <begin position="21"/>
        <end position="97"/>
    </location>
</feature>
<feature type="compositionally biased region" description="Polar residues" evidence="2">
    <location>
        <begin position="38"/>
        <end position="63"/>
    </location>
</feature>
<feature type="compositionally biased region" description="Polar residues" evidence="2">
    <location>
        <begin position="70"/>
        <end position="97"/>
    </location>
</feature>
<proteinExistence type="inferred from homology"/>
<dbReference type="EMBL" id="BA000033">
    <property type="protein sequence ID" value="BAB94937.1"/>
    <property type="molecule type" value="Genomic_DNA"/>
</dbReference>
<dbReference type="RefSeq" id="WP_000018608.1">
    <property type="nucleotide sequence ID" value="NC_003923.1"/>
</dbReference>
<dbReference type="SMR" id="Q7A133"/>
<dbReference type="KEGG" id="sam:MW1072"/>
<dbReference type="HOGENOM" id="CLU_078499_4_1_9"/>
<dbReference type="GO" id="GO:0005737">
    <property type="term" value="C:cytoplasm"/>
    <property type="evidence" value="ECO:0007669"/>
    <property type="project" value="UniProtKB-SubCell"/>
</dbReference>
<dbReference type="GO" id="GO:0000917">
    <property type="term" value="P:division septum assembly"/>
    <property type="evidence" value="ECO:0007669"/>
    <property type="project" value="UniProtKB-KW"/>
</dbReference>
<dbReference type="GO" id="GO:0043093">
    <property type="term" value="P:FtsZ-dependent cytokinesis"/>
    <property type="evidence" value="ECO:0007669"/>
    <property type="project" value="UniProtKB-UniRule"/>
</dbReference>
<dbReference type="Gene3D" id="3.30.110.150">
    <property type="entry name" value="SepF-like protein"/>
    <property type="match status" value="1"/>
</dbReference>
<dbReference type="HAMAP" id="MF_01197">
    <property type="entry name" value="SepF"/>
    <property type="match status" value="1"/>
</dbReference>
<dbReference type="InterPro" id="IPR023052">
    <property type="entry name" value="Cell_div_SepF"/>
</dbReference>
<dbReference type="InterPro" id="IPR007561">
    <property type="entry name" value="Cell_div_SepF/SepF-rel"/>
</dbReference>
<dbReference type="InterPro" id="IPR038594">
    <property type="entry name" value="SepF-like_sf"/>
</dbReference>
<dbReference type="PANTHER" id="PTHR35798">
    <property type="entry name" value="CELL DIVISION PROTEIN SEPF"/>
    <property type="match status" value="1"/>
</dbReference>
<dbReference type="PANTHER" id="PTHR35798:SF1">
    <property type="entry name" value="CELL DIVISION PROTEIN SEPF"/>
    <property type="match status" value="1"/>
</dbReference>
<dbReference type="Pfam" id="PF04472">
    <property type="entry name" value="SepF"/>
    <property type="match status" value="1"/>
</dbReference>
<reference key="1">
    <citation type="journal article" date="2002" name="Lancet">
        <title>Genome and virulence determinants of high virulence community-acquired MRSA.</title>
        <authorList>
            <person name="Baba T."/>
            <person name="Takeuchi F."/>
            <person name="Kuroda M."/>
            <person name="Yuzawa H."/>
            <person name="Aoki K."/>
            <person name="Oguchi A."/>
            <person name="Nagai Y."/>
            <person name="Iwama N."/>
            <person name="Asano K."/>
            <person name="Naimi T."/>
            <person name="Kuroda H."/>
            <person name="Cui L."/>
            <person name="Yamamoto K."/>
            <person name="Hiramatsu K."/>
        </authorList>
    </citation>
    <scope>NUCLEOTIDE SEQUENCE [LARGE SCALE GENOMIC DNA]</scope>
    <source>
        <strain>MW2</strain>
    </source>
</reference>
<name>SEPF_STAAW</name>
<accession>Q7A133</accession>